<evidence type="ECO:0000255" key="1">
    <source>
        <dbReference type="HAMAP-Rule" id="MF_00379"/>
    </source>
</evidence>
<keyword id="KW-0963">Cytoplasm</keyword>
<keyword id="KW-0342">GTP-binding</keyword>
<keyword id="KW-0378">Hydrolase</keyword>
<keyword id="KW-0460">Magnesium</keyword>
<keyword id="KW-0479">Metal-binding</keyword>
<keyword id="KW-0547">Nucleotide-binding</keyword>
<keyword id="KW-0630">Potassium</keyword>
<keyword id="KW-0819">tRNA processing</keyword>
<protein>
    <recommendedName>
        <fullName evidence="1">tRNA modification GTPase MnmE</fullName>
        <ecNumber evidence="1">3.6.-.-</ecNumber>
    </recommendedName>
</protein>
<accession>Q4AAC5</accession>
<feature type="chain" id="PRO_0000345841" description="tRNA modification GTPase MnmE">
    <location>
        <begin position="1"/>
        <end position="442"/>
    </location>
</feature>
<feature type="domain" description="TrmE-type G">
    <location>
        <begin position="216"/>
        <end position="366"/>
    </location>
</feature>
<feature type="binding site" evidence="1">
    <location>
        <position position="22"/>
    </location>
    <ligand>
        <name>(6S)-5-formyl-5,6,7,8-tetrahydrofolate</name>
        <dbReference type="ChEBI" id="CHEBI:57457"/>
    </ligand>
</feature>
<feature type="binding site" evidence="1">
    <location>
        <position position="79"/>
    </location>
    <ligand>
        <name>(6S)-5-formyl-5,6,7,8-tetrahydrofolate</name>
        <dbReference type="ChEBI" id="CHEBI:57457"/>
    </ligand>
</feature>
<feature type="binding site" evidence="1">
    <location>
        <position position="119"/>
    </location>
    <ligand>
        <name>(6S)-5-formyl-5,6,7,8-tetrahydrofolate</name>
        <dbReference type="ChEBI" id="CHEBI:57457"/>
    </ligand>
</feature>
<feature type="binding site" evidence="1">
    <location>
        <begin position="226"/>
        <end position="231"/>
    </location>
    <ligand>
        <name>GTP</name>
        <dbReference type="ChEBI" id="CHEBI:37565"/>
    </ligand>
</feature>
<feature type="binding site" evidence="1">
    <location>
        <position position="226"/>
    </location>
    <ligand>
        <name>K(+)</name>
        <dbReference type="ChEBI" id="CHEBI:29103"/>
    </ligand>
</feature>
<feature type="binding site" evidence="1">
    <location>
        <position position="230"/>
    </location>
    <ligand>
        <name>Mg(2+)</name>
        <dbReference type="ChEBI" id="CHEBI:18420"/>
    </ligand>
</feature>
<feature type="binding site" evidence="1">
    <location>
        <begin position="245"/>
        <end position="251"/>
    </location>
    <ligand>
        <name>GTP</name>
        <dbReference type="ChEBI" id="CHEBI:37565"/>
    </ligand>
</feature>
<feature type="binding site" evidence="1">
    <location>
        <position position="245"/>
    </location>
    <ligand>
        <name>K(+)</name>
        <dbReference type="ChEBI" id="CHEBI:29103"/>
    </ligand>
</feature>
<feature type="binding site" evidence="1">
    <location>
        <position position="247"/>
    </location>
    <ligand>
        <name>K(+)</name>
        <dbReference type="ChEBI" id="CHEBI:29103"/>
    </ligand>
</feature>
<feature type="binding site" evidence="1">
    <location>
        <position position="250"/>
    </location>
    <ligand>
        <name>K(+)</name>
        <dbReference type="ChEBI" id="CHEBI:29103"/>
    </ligand>
</feature>
<feature type="binding site" evidence="1">
    <location>
        <position position="251"/>
    </location>
    <ligand>
        <name>Mg(2+)</name>
        <dbReference type="ChEBI" id="CHEBI:18420"/>
    </ligand>
</feature>
<feature type="binding site" evidence="1">
    <location>
        <begin position="270"/>
        <end position="273"/>
    </location>
    <ligand>
        <name>GTP</name>
        <dbReference type="ChEBI" id="CHEBI:37565"/>
    </ligand>
</feature>
<feature type="binding site" evidence="1">
    <location>
        <position position="442"/>
    </location>
    <ligand>
        <name>(6S)-5-formyl-5,6,7,8-tetrahydrofolate</name>
        <dbReference type="ChEBI" id="CHEBI:57457"/>
    </ligand>
</feature>
<sequence length="442" mass="49516">MLSDTICAIASGQINQAISIIRISGPNAFKIMEKIFLGKVGRSMEITFGWIHDDNQKIDQVLVLWFAGNKNFVGEDTVEINAHGGVLNTNLILELILKTKLARLANPGEFSLRAFLNGKIDLVKAQAINDLIHAEVKVQHQAALNQFLGKSSNFIKNLIEKIEEIIGIIEVNIDYPEYDDVEILTSDVLLPRINQLLADFDQLIKIANNSRLIYQGIKTCLVGAPNSGKSSLLNILINENKAIISEIPGTTRDVVEGNFVLDGLLFKLFDTAGIRKTTEKIEQIGIEKSYESIKKADLILHIIDASEKNRQNLDLKAKTRPDQIYLKIYNKSDLLENQEEFKDEILISAKYQKIENLLEKIKSIFAFLGKNKEFVANSFQISQIELGKLAILDAKTSLESGFGPEIAIVDLRIAWKELKTIFGRVDDENLLDSIFSKFCLGK</sequence>
<proteinExistence type="inferred from homology"/>
<reference key="1">
    <citation type="journal article" date="2005" name="J. Bacteriol.">
        <title>Swine and poultry pathogens: the complete genome sequences of two strains of Mycoplasma hyopneumoniae and a strain of Mycoplasma synoviae.</title>
        <authorList>
            <person name="Vasconcelos A.T.R."/>
            <person name="Ferreira H.B."/>
            <person name="Bizarro C.V."/>
            <person name="Bonatto S.L."/>
            <person name="Carvalho M.O."/>
            <person name="Pinto P.M."/>
            <person name="Almeida D.F."/>
            <person name="Almeida L.G.P."/>
            <person name="Almeida R."/>
            <person name="Alves-Junior L."/>
            <person name="Assuncao E.N."/>
            <person name="Azevedo V.A.C."/>
            <person name="Bogo M.R."/>
            <person name="Brigido M.M."/>
            <person name="Brocchi M."/>
            <person name="Burity H.A."/>
            <person name="Camargo A.A."/>
            <person name="Camargo S.S."/>
            <person name="Carepo M.S."/>
            <person name="Carraro D.M."/>
            <person name="de Mattos Cascardo J.C."/>
            <person name="Castro L.A."/>
            <person name="Cavalcanti G."/>
            <person name="Chemale G."/>
            <person name="Collevatti R.G."/>
            <person name="Cunha C.W."/>
            <person name="Dallagiovanna B."/>
            <person name="Dambros B.P."/>
            <person name="Dellagostin O.A."/>
            <person name="Falcao C."/>
            <person name="Fantinatti-Garboggini F."/>
            <person name="Felipe M.S.S."/>
            <person name="Fiorentin L."/>
            <person name="Franco G.R."/>
            <person name="Freitas N.S.A."/>
            <person name="Frias D."/>
            <person name="Grangeiro T.B."/>
            <person name="Grisard E.C."/>
            <person name="Guimaraes C.T."/>
            <person name="Hungria M."/>
            <person name="Jardim S.N."/>
            <person name="Krieger M.A."/>
            <person name="Laurino J.P."/>
            <person name="Lima L.F.A."/>
            <person name="Lopes M.I."/>
            <person name="Loreto E.L.S."/>
            <person name="Madeira H.M.F."/>
            <person name="Manfio G.P."/>
            <person name="Maranhao A.Q."/>
            <person name="Martinkovics C.T."/>
            <person name="Medeiros S.R.B."/>
            <person name="Moreira M.A.M."/>
            <person name="Neiva M."/>
            <person name="Ramalho-Neto C.E."/>
            <person name="Nicolas M.F."/>
            <person name="Oliveira S.C."/>
            <person name="Paixao R.F.C."/>
            <person name="Pedrosa F.O."/>
            <person name="Pena S.D.J."/>
            <person name="Pereira M."/>
            <person name="Pereira-Ferrari L."/>
            <person name="Piffer I."/>
            <person name="Pinto L.S."/>
            <person name="Potrich D.P."/>
            <person name="Salim A.C.M."/>
            <person name="Santos F.R."/>
            <person name="Schmitt R."/>
            <person name="Schneider M.P.C."/>
            <person name="Schrank A."/>
            <person name="Schrank I.S."/>
            <person name="Schuck A.F."/>
            <person name="Seuanez H.N."/>
            <person name="Silva D.W."/>
            <person name="Silva R."/>
            <person name="Silva S.C."/>
            <person name="Soares C.M.A."/>
            <person name="Souza K.R.L."/>
            <person name="Souza R.C."/>
            <person name="Staats C.C."/>
            <person name="Steffens M.B.R."/>
            <person name="Teixeira S.M.R."/>
            <person name="Urmenyi T.P."/>
            <person name="Vainstein M.H."/>
            <person name="Zuccherato L.W."/>
            <person name="Simpson A.J.G."/>
            <person name="Zaha A."/>
        </authorList>
    </citation>
    <scope>NUCLEOTIDE SEQUENCE [LARGE SCALE GENOMIC DNA]</scope>
    <source>
        <strain>J / ATCC 25934 / NCTC 10110</strain>
    </source>
</reference>
<dbReference type="EC" id="3.6.-.-" evidence="1"/>
<dbReference type="EMBL" id="AE017243">
    <property type="protein sequence ID" value="AAZ44296.1"/>
    <property type="molecule type" value="Genomic_DNA"/>
</dbReference>
<dbReference type="RefSeq" id="WP_011283988.1">
    <property type="nucleotide sequence ID" value="NC_007295.1"/>
</dbReference>
<dbReference type="SMR" id="Q4AAC5"/>
<dbReference type="GeneID" id="41334507"/>
<dbReference type="KEGG" id="mhj:MHJ_0205"/>
<dbReference type="eggNOG" id="COG0486">
    <property type="taxonomic scope" value="Bacteria"/>
</dbReference>
<dbReference type="HOGENOM" id="CLU_019624_4_1_14"/>
<dbReference type="OrthoDB" id="9805918at2"/>
<dbReference type="Proteomes" id="UP000000548">
    <property type="component" value="Chromosome"/>
</dbReference>
<dbReference type="GO" id="GO:0005829">
    <property type="term" value="C:cytosol"/>
    <property type="evidence" value="ECO:0007669"/>
    <property type="project" value="TreeGrafter"/>
</dbReference>
<dbReference type="GO" id="GO:0005525">
    <property type="term" value="F:GTP binding"/>
    <property type="evidence" value="ECO:0007669"/>
    <property type="project" value="UniProtKB-UniRule"/>
</dbReference>
<dbReference type="GO" id="GO:0003924">
    <property type="term" value="F:GTPase activity"/>
    <property type="evidence" value="ECO:0007669"/>
    <property type="project" value="UniProtKB-UniRule"/>
</dbReference>
<dbReference type="GO" id="GO:0046872">
    <property type="term" value="F:metal ion binding"/>
    <property type="evidence" value="ECO:0007669"/>
    <property type="project" value="UniProtKB-KW"/>
</dbReference>
<dbReference type="GO" id="GO:0030488">
    <property type="term" value="P:tRNA methylation"/>
    <property type="evidence" value="ECO:0007669"/>
    <property type="project" value="TreeGrafter"/>
</dbReference>
<dbReference type="GO" id="GO:0002098">
    <property type="term" value="P:tRNA wobble uridine modification"/>
    <property type="evidence" value="ECO:0007669"/>
    <property type="project" value="TreeGrafter"/>
</dbReference>
<dbReference type="CDD" id="cd04164">
    <property type="entry name" value="trmE"/>
    <property type="match status" value="1"/>
</dbReference>
<dbReference type="CDD" id="cd14858">
    <property type="entry name" value="TrmE_N"/>
    <property type="match status" value="1"/>
</dbReference>
<dbReference type="Gene3D" id="3.40.50.300">
    <property type="entry name" value="P-loop containing nucleotide triphosphate hydrolases"/>
    <property type="match status" value="1"/>
</dbReference>
<dbReference type="Gene3D" id="3.30.1360.120">
    <property type="entry name" value="Probable tRNA modification gtpase trme, domain 1"/>
    <property type="match status" value="1"/>
</dbReference>
<dbReference type="Gene3D" id="1.20.120.430">
    <property type="entry name" value="tRNA modification GTPase MnmE domain 2"/>
    <property type="match status" value="1"/>
</dbReference>
<dbReference type="HAMAP" id="MF_00379">
    <property type="entry name" value="GTPase_MnmE"/>
    <property type="match status" value="1"/>
</dbReference>
<dbReference type="InterPro" id="IPR031168">
    <property type="entry name" value="G_TrmE"/>
</dbReference>
<dbReference type="InterPro" id="IPR006073">
    <property type="entry name" value="GTP-bd"/>
</dbReference>
<dbReference type="InterPro" id="IPR018948">
    <property type="entry name" value="GTP-bd_TrmE_N"/>
</dbReference>
<dbReference type="InterPro" id="IPR004520">
    <property type="entry name" value="GTPase_MnmE"/>
</dbReference>
<dbReference type="InterPro" id="IPR027368">
    <property type="entry name" value="MnmE_dom2"/>
</dbReference>
<dbReference type="InterPro" id="IPR025867">
    <property type="entry name" value="MnmE_helical"/>
</dbReference>
<dbReference type="InterPro" id="IPR027417">
    <property type="entry name" value="P-loop_NTPase"/>
</dbReference>
<dbReference type="InterPro" id="IPR005225">
    <property type="entry name" value="Small_GTP-bd"/>
</dbReference>
<dbReference type="InterPro" id="IPR027266">
    <property type="entry name" value="TrmE/GcvT_dom1"/>
</dbReference>
<dbReference type="NCBIfam" id="TIGR00450">
    <property type="entry name" value="mnmE_trmE_thdF"/>
    <property type="match status" value="1"/>
</dbReference>
<dbReference type="NCBIfam" id="TIGR00231">
    <property type="entry name" value="small_GTP"/>
    <property type="match status" value="1"/>
</dbReference>
<dbReference type="PANTHER" id="PTHR42714">
    <property type="entry name" value="TRNA MODIFICATION GTPASE GTPBP3"/>
    <property type="match status" value="1"/>
</dbReference>
<dbReference type="PANTHER" id="PTHR42714:SF2">
    <property type="entry name" value="TRNA MODIFICATION GTPASE GTPBP3, MITOCHONDRIAL"/>
    <property type="match status" value="1"/>
</dbReference>
<dbReference type="Pfam" id="PF01926">
    <property type="entry name" value="MMR_HSR1"/>
    <property type="match status" value="1"/>
</dbReference>
<dbReference type="Pfam" id="PF12631">
    <property type="entry name" value="MnmE_helical"/>
    <property type="match status" value="1"/>
</dbReference>
<dbReference type="Pfam" id="PF10396">
    <property type="entry name" value="TrmE_N"/>
    <property type="match status" value="1"/>
</dbReference>
<dbReference type="PRINTS" id="PR00326">
    <property type="entry name" value="GTP1OBG"/>
</dbReference>
<dbReference type="SUPFAM" id="SSF103025">
    <property type="entry name" value="Folate-binding domain"/>
    <property type="match status" value="1"/>
</dbReference>
<dbReference type="SUPFAM" id="SSF52540">
    <property type="entry name" value="P-loop containing nucleoside triphosphate hydrolases"/>
    <property type="match status" value="1"/>
</dbReference>
<dbReference type="SUPFAM" id="SSF116878">
    <property type="entry name" value="TrmE connector domain"/>
    <property type="match status" value="1"/>
</dbReference>
<dbReference type="PROSITE" id="PS51709">
    <property type="entry name" value="G_TRME"/>
    <property type="match status" value="1"/>
</dbReference>
<name>MNME_MESHJ</name>
<comment type="function">
    <text evidence="1">Exhibits a very high intrinsic GTPase hydrolysis rate. Involved in the addition of a carboxymethylaminomethyl (cmnm) group at the wobble position (U34) of certain tRNAs, forming tRNA-cmnm(5)s(2)U34.</text>
</comment>
<comment type="cofactor">
    <cofactor evidence="1">
        <name>K(+)</name>
        <dbReference type="ChEBI" id="CHEBI:29103"/>
    </cofactor>
    <text evidence="1">Binds 1 potassium ion per subunit.</text>
</comment>
<comment type="subunit">
    <text evidence="1">Homodimer. Heterotetramer of two MnmE and two MnmG subunits.</text>
</comment>
<comment type="subcellular location">
    <subcellularLocation>
        <location evidence="1">Cytoplasm</location>
    </subcellularLocation>
</comment>
<comment type="similarity">
    <text evidence="1">Belongs to the TRAFAC class TrmE-Era-EngA-EngB-Septin-like GTPase superfamily. TrmE GTPase family.</text>
</comment>
<gene>
    <name evidence="1" type="primary">mnmE</name>
    <name evidence="1" type="synonym">trmE</name>
    <name type="ordered locus">MHJ_0205</name>
</gene>
<organism>
    <name type="scientific">Mesomycoplasma hyopneumoniae (strain J / ATCC 25934 / NCTC 10110)</name>
    <name type="common">Mycoplasma hyopneumoniae</name>
    <dbReference type="NCBI Taxonomy" id="262719"/>
    <lineage>
        <taxon>Bacteria</taxon>
        <taxon>Bacillati</taxon>
        <taxon>Mycoplasmatota</taxon>
        <taxon>Mycoplasmoidales</taxon>
        <taxon>Metamycoplasmataceae</taxon>
        <taxon>Mesomycoplasma</taxon>
    </lineage>
</organism>